<proteinExistence type="evidence at protein level"/>
<organism>
    <name type="scientific">Homo sapiens</name>
    <name type="common">Human</name>
    <dbReference type="NCBI Taxonomy" id="9606"/>
    <lineage>
        <taxon>Eukaryota</taxon>
        <taxon>Metazoa</taxon>
        <taxon>Chordata</taxon>
        <taxon>Craniata</taxon>
        <taxon>Vertebrata</taxon>
        <taxon>Euteleostomi</taxon>
        <taxon>Mammalia</taxon>
        <taxon>Eutheria</taxon>
        <taxon>Euarchontoglires</taxon>
        <taxon>Primates</taxon>
        <taxon>Haplorrhini</taxon>
        <taxon>Catarrhini</taxon>
        <taxon>Hominidae</taxon>
        <taxon>Homo</taxon>
    </lineage>
</organism>
<accession>A4QMS7</accession>
<evidence type="ECO:0000250" key="1">
    <source>
        <dbReference type="UniProtKB" id="Q9DAR0"/>
    </source>
</evidence>
<evidence type="ECO:0000256" key="2">
    <source>
        <dbReference type="SAM" id="MobiDB-lite"/>
    </source>
</evidence>
<evidence type="ECO:0000269" key="3">
    <source>
    </source>
</evidence>
<evidence type="ECO:0000312" key="4">
    <source>
        <dbReference type="HGNC" id="HGNC:27028"/>
    </source>
</evidence>
<gene>
    <name evidence="4" type="primary">CFAP90</name>
    <name type="synonym">C5orf49</name>
</gene>
<keyword id="KW-0002">3D-structure</keyword>
<keyword id="KW-0966">Cell projection</keyword>
<keyword id="KW-0969">Cilium</keyword>
<keyword id="KW-0963">Cytoplasm</keyword>
<keyword id="KW-0206">Cytoskeleton</keyword>
<keyword id="KW-0282">Flagellum</keyword>
<keyword id="KW-1267">Proteomics identification</keyword>
<keyword id="KW-1185">Reference proteome</keyword>
<comment type="function">
    <text evidence="3">Microtubule inner protein (MIP) part of the dynein-decorated doublet microtubules (DMTs) in cilia axoneme, which is required for motile cilia beating.</text>
</comment>
<comment type="subunit">
    <text evidence="1">Microtubule inner protein component of sperm flagellar doublet microtubules.</text>
</comment>
<comment type="interaction">
    <interactant intactId="EBI-12039847">
        <id>A4QMS7</id>
    </interactant>
    <interactant intactId="EBI-745859">
        <id>P55273</id>
        <label>CDKN2D</label>
    </interactant>
    <organismsDiffer>false</organismsDiffer>
    <experiments>3</experiments>
</comment>
<comment type="interaction">
    <interactant intactId="EBI-12039847">
        <id>A4QMS7</id>
    </interactant>
    <interactant intactId="EBI-7116203">
        <id>O75031</id>
        <label>HSF2BP</label>
    </interactant>
    <organismsDiffer>false</organismsDiffer>
    <experiments>3</experiments>
</comment>
<comment type="interaction">
    <interactant intactId="EBI-12039847">
        <id>A4QMS7</id>
    </interactant>
    <interactant intactId="EBI-948001">
        <id>Q15323</id>
        <label>KRT31</label>
    </interactant>
    <organismsDiffer>false</organismsDiffer>
    <experiments>3</experiments>
</comment>
<comment type="interaction">
    <interactant intactId="EBI-12039847">
        <id>A4QMS7</id>
    </interactant>
    <interactant intactId="EBI-1047093">
        <id>O76011</id>
        <label>KRT34</label>
    </interactant>
    <organismsDiffer>false</organismsDiffer>
    <experiments>3</experiments>
</comment>
<comment type="subcellular location">
    <subcellularLocation>
        <location evidence="3">Cytoplasm</location>
        <location evidence="3">Cytoskeleton</location>
        <location evidence="3">Cilium axoneme</location>
    </subcellularLocation>
    <subcellularLocation>
        <location evidence="1">Cytoplasm</location>
        <location evidence="1">Cytoskeleton</location>
        <location evidence="1">Flagellum axoneme</location>
    </subcellularLocation>
</comment>
<name>CFA90_HUMAN</name>
<reference key="1">
    <citation type="submission" date="2005-09" db="EMBL/GenBank/DDBJ databases">
        <authorList>
            <person name="Mural R.J."/>
            <person name="Istrail S."/>
            <person name="Sutton G.G."/>
            <person name="Florea L."/>
            <person name="Halpern A.L."/>
            <person name="Mobarry C.M."/>
            <person name="Lippert R."/>
            <person name="Walenz B."/>
            <person name="Shatkay H."/>
            <person name="Dew I."/>
            <person name="Miller J.R."/>
            <person name="Flanigan M.J."/>
            <person name="Edwards N.J."/>
            <person name="Bolanos R."/>
            <person name="Fasulo D."/>
            <person name="Halldorsson B.V."/>
            <person name="Hannenhalli S."/>
            <person name="Turner R."/>
            <person name="Yooseph S."/>
            <person name="Lu F."/>
            <person name="Nusskern D.R."/>
            <person name="Shue B.C."/>
            <person name="Zheng X.H."/>
            <person name="Zhong F."/>
            <person name="Delcher A.L."/>
            <person name="Huson D.H."/>
            <person name="Kravitz S.A."/>
            <person name="Mouchard L."/>
            <person name="Reinert K."/>
            <person name="Remington K.A."/>
            <person name="Clark A.G."/>
            <person name="Waterman M.S."/>
            <person name="Eichler E.E."/>
            <person name="Adams M.D."/>
            <person name="Hunkapiller M.W."/>
            <person name="Myers E.W."/>
            <person name="Venter J.C."/>
        </authorList>
    </citation>
    <scope>NUCLEOTIDE SEQUENCE [LARGE SCALE GENOMIC DNA]</scope>
</reference>
<reference key="2">
    <citation type="journal article" date="2004" name="Genome Res.">
        <title>The status, quality, and expansion of the NIH full-length cDNA project: the Mammalian Gene Collection (MGC).</title>
        <authorList>
            <consortium name="The MGC Project Team"/>
        </authorList>
    </citation>
    <scope>NUCLEOTIDE SEQUENCE [LARGE SCALE MRNA]</scope>
</reference>
<reference key="3">
    <citation type="journal article" date="2022" name="Proc. Natl. Acad. Sci. U.S.A.">
        <title>SPACA9 is a lumenal protein of human ciliary singlet and doublet microtubules.</title>
        <authorList>
            <person name="Gui M."/>
            <person name="Croft J.T."/>
            <person name="Zabeo D."/>
            <person name="Acharya V."/>
            <person name="Kollman J.M."/>
            <person name="Burgoyne T."/>
            <person name="Hoog J.L."/>
            <person name="Brown A."/>
        </authorList>
    </citation>
    <scope>STRUCTURE BY ELECTRON MICROSCOPY (3.60 ANGSTROMS) IN ASSOCIATION WITH MICROTUBULES</scope>
    <scope>SUBCELLULAR LOCATION</scope>
    <scope>FUNCTION</scope>
</reference>
<feature type="chain" id="PRO_0000336090" description="Cilia- and flagella-associated protein 90">
    <location>
        <begin position="1"/>
        <end position="147"/>
    </location>
</feature>
<feature type="region of interest" description="Disordered" evidence="2">
    <location>
        <begin position="1"/>
        <end position="36"/>
    </location>
</feature>
<feature type="sequence variant" id="VAR_043546" description="In dbSNP:rs6883562.">
    <original>Q</original>
    <variation>H</variation>
    <location>
        <position position="68"/>
    </location>
</feature>
<feature type="sequence variant" id="VAR_043547" description="In dbSNP:rs16879215.">
    <original>E</original>
    <variation>K</variation>
    <location>
        <position position="87"/>
    </location>
</feature>
<feature type="sequence variant" id="VAR_043548" description="In dbSNP:rs326181.">
    <original>P</original>
    <variation>S</variation>
    <location>
        <position position="139"/>
    </location>
</feature>
<sequence length="147" mass="16991">MEDDEEETTASTLRGKPRPPPVSAQSAFSYIPPRRLDPKEHSYYYRPARTGIISLYDCIFKRRLDYDQKLHRDDREHAKSLGLHVNEEEQERPVGVLTSSVYGKRINQPIEPLNRDFGRANHVQADFYRKNDIPSLKEPGFGHIAPS</sequence>
<protein>
    <recommendedName>
        <fullName>Cilia- and flagella-associated protein 90</fullName>
    </recommendedName>
</protein>
<dbReference type="EMBL" id="CH471102">
    <property type="protein sequence ID" value="EAX08096.1"/>
    <property type="molecule type" value="Genomic_DNA"/>
</dbReference>
<dbReference type="EMBL" id="BC104205">
    <property type="protein sequence ID" value="AAI04206.1"/>
    <property type="molecule type" value="mRNA"/>
</dbReference>
<dbReference type="EMBL" id="BC115361">
    <property type="protein sequence ID" value="AAI15362.1"/>
    <property type="molecule type" value="mRNA"/>
</dbReference>
<dbReference type="CCDS" id="CCDS43300.1"/>
<dbReference type="RefSeq" id="NP_001083053.1">
    <property type="nucleotide sequence ID" value="NM_001089584.3"/>
</dbReference>
<dbReference type="PDB" id="7UNG">
    <property type="method" value="EM"/>
    <property type="resolution" value="3.60 A"/>
    <property type="chains" value="L1/L2=1-147"/>
</dbReference>
<dbReference type="PDB" id="8J07">
    <property type="method" value="EM"/>
    <property type="resolution" value="4.10 A"/>
    <property type="chains" value="5X/5Y=1-147"/>
</dbReference>
<dbReference type="PDBsum" id="7UNG"/>
<dbReference type="PDBsum" id="8J07"/>
<dbReference type="EMDB" id="EMD-26624"/>
<dbReference type="EMDB" id="EMD-35888"/>
<dbReference type="SMR" id="A4QMS7"/>
<dbReference type="BioGRID" id="126385">
    <property type="interactions" value="4"/>
</dbReference>
<dbReference type="FunCoup" id="A4QMS7">
    <property type="interactions" value="56"/>
</dbReference>
<dbReference type="IntAct" id="A4QMS7">
    <property type="interactions" value="4"/>
</dbReference>
<dbReference type="STRING" id="9606.ENSP00000382708"/>
<dbReference type="iPTMnet" id="A4QMS7"/>
<dbReference type="PhosphoSitePlus" id="A4QMS7"/>
<dbReference type="BioMuta" id="C5orf49"/>
<dbReference type="MassIVE" id="A4QMS7"/>
<dbReference type="PaxDb" id="9606-ENSP00000382708"/>
<dbReference type="PeptideAtlas" id="A4QMS7"/>
<dbReference type="ProteomicsDB" id="684"/>
<dbReference type="Antibodypedia" id="64337">
    <property type="antibodies" value="38 antibodies from 7 providers"/>
</dbReference>
<dbReference type="DNASU" id="134121"/>
<dbReference type="Ensembl" id="ENST00000399810.7">
    <property type="protein sequence ID" value="ENSP00000382708.2"/>
    <property type="gene ID" value="ENSG00000215217.7"/>
</dbReference>
<dbReference type="GeneID" id="134121"/>
<dbReference type="KEGG" id="hsa:134121"/>
<dbReference type="MANE-Select" id="ENST00000399810.7">
    <property type="protein sequence ID" value="ENSP00000382708.2"/>
    <property type="RefSeq nucleotide sequence ID" value="NM_001089584.3"/>
    <property type="RefSeq protein sequence ID" value="NP_001083053.1"/>
</dbReference>
<dbReference type="UCSC" id="uc003jea.7">
    <property type="organism name" value="human"/>
</dbReference>
<dbReference type="AGR" id="HGNC:27028"/>
<dbReference type="CTD" id="134121"/>
<dbReference type="GeneCards" id="CFAP90"/>
<dbReference type="HGNC" id="HGNC:27028">
    <property type="gene designation" value="CFAP90"/>
</dbReference>
<dbReference type="HPA" id="ENSG00000215217">
    <property type="expression patterns" value="Group enriched (brain, choroid plexus, fallopian tube, testis)"/>
</dbReference>
<dbReference type="neXtProt" id="NX_A4QMS7"/>
<dbReference type="OpenTargets" id="ENSG00000215217"/>
<dbReference type="PharmGKB" id="PA162380347"/>
<dbReference type="VEuPathDB" id="HostDB:ENSG00000215217"/>
<dbReference type="eggNOG" id="ENOG502S3H1">
    <property type="taxonomic scope" value="Eukaryota"/>
</dbReference>
<dbReference type="GeneTree" id="ENSGT00390000015121"/>
<dbReference type="HOGENOM" id="CLU_127177_0_0_1"/>
<dbReference type="InParanoid" id="A4QMS7"/>
<dbReference type="OMA" id="RKNGIAC"/>
<dbReference type="OrthoDB" id="10057935at2759"/>
<dbReference type="PAN-GO" id="A4QMS7">
    <property type="GO annotations" value="0 GO annotations based on evolutionary models"/>
</dbReference>
<dbReference type="PhylomeDB" id="A4QMS7"/>
<dbReference type="TreeFam" id="TF328385"/>
<dbReference type="PathwayCommons" id="A4QMS7"/>
<dbReference type="SignaLink" id="A4QMS7"/>
<dbReference type="BioGRID-ORCS" id="134121">
    <property type="hits" value="15 hits in 1111 CRISPR screens"/>
</dbReference>
<dbReference type="ChiTaRS" id="C5orf49">
    <property type="organism name" value="human"/>
</dbReference>
<dbReference type="GenomeRNAi" id="134121"/>
<dbReference type="Pharos" id="A4QMS7">
    <property type="development level" value="Tdark"/>
</dbReference>
<dbReference type="PRO" id="PR:A4QMS7"/>
<dbReference type="Proteomes" id="UP000005640">
    <property type="component" value="Chromosome 5"/>
</dbReference>
<dbReference type="RNAct" id="A4QMS7">
    <property type="molecule type" value="protein"/>
</dbReference>
<dbReference type="Bgee" id="ENSG00000215217">
    <property type="expression patterns" value="Expressed in right uterine tube and 99 other cell types or tissues"/>
</dbReference>
<dbReference type="ExpressionAtlas" id="A4QMS7">
    <property type="expression patterns" value="baseline and differential"/>
</dbReference>
<dbReference type="GO" id="GO:0160112">
    <property type="term" value="C:axonemal B tubule inner sheath"/>
    <property type="evidence" value="ECO:0000250"/>
    <property type="project" value="UniProtKB"/>
</dbReference>
<dbReference type="GO" id="GO:0005930">
    <property type="term" value="C:axoneme"/>
    <property type="evidence" value="ECO:0000314"/>
    <property type="project" value="UniProtKB"/>
</dbReference>
<dbReference type="GO" id="GO:0036064">
    <property type="term" value="C:ciliary basal body"/>
    <property type="evidence" value="ECO:0000314"/>
    <property type="project" value="GO_Central"/>
</dbReference>
<dbReference type="GO" id="GO:0036126">
    <property type="term" value="C:sperm flagellum"/>
    <property type="evidence" value="ECO:0000250"/>
    <property type="project" value="UniProtKB"/>
</dbReference>
<dbReference type="GO" id="GO:0030317">
    <property type="term" value="P:flagellated sperm motility"/>
    <property type="evidence" value="ECO:0000250"/>
    <property type="project" value="UniProtKB"/>
</dbReference>
<dbReference type="InterPro" id="IPR027901">
    <property type="entry name" value="CFAP90"/>
</dbReference>
<dbReference type="PANTHER" id="PTHR34444:SF1">
    <property type="entry name" value="CILIA- AND FLAGELLA-ASSOCIATED PROTEIN 90"/>
    <property type="match status" value="1"/>
</dbReference>
<dbReference type="PANTHER" id="PTHR34444">
    <property type="entry name" value="LOC361192"/>
    <property type="match status" value="1"/>
</dbReference>
<dbReference type="Pfam" id="PF15074">
    <property type="entry name" value="CFAP90"/>
    <property type="match status" value="1"/>
</dbReference>